<feature type="chain" id="PRO_1000062051" description="High frequency lysogenization protein HflD homolog">
    <location>
        <begin position="1"/>
        <end position="206"/>
    </location>
</feature>
<reference key="1">
    <citation type="submission" date="2007-04" db="EMBL/GenBank/DDBJ databases">
        <title>Complete sequence of Pseudomonas mendocina ymp.</title>
        <authorList>
            <consortium name="US DOE Joint Genome Institute"/>
            <person name="Copeland A."/>
            <person name="Lucas S."/>
            <person name="Lapidus A."/>
            <person name="Barry K."/>
            <person name="Glavina del Rio T."/>
            <person name="Dalin E."/>
            <person name="Tice H."/>
            <person name="Pitluck S."/>
            <person name="Kiss H."/>
            <person name="Brettin T."/>
            <person name="Detter J.C."/>
            <person name="Bruce D."/>
            <person name="Han C."/>
            <person name="Schmutz J."/>
            <person name="Larimer F."/>
            <person name="Land M."/>
            <person name="Hauser L."/>
            <person name="Kyrpides N."/>
            <person name="Mikhailova N."/>
            <person name="Hersman L."/>
            <person name="Dubois J."/>
            <person name="Maurice P."/>
            <person name="Richardson P."/>
        </authorList>
    </citation>
    <scope>NUCLEOTIDE SEQUENCE [LARGE SCALE GENOMIC DNA]</scope>
    <source>
        <strain>ymp</strain>
    </source>
</reference>
<proteinExistence type="inferred from homology"/>
<comment type="subcellular location">
    <subcellularLocation>
        <location>Cytoplasm</location>
    </subcellularLocation>
    <subcellularLocation>
        <location evidence="1">Cell inner membrane</location>
        <topology evidence="1">Peripheral membrane protein</topology>
        <orientation evidence="1">Cytoplasmic side</orientation>
    </subcellularLocation>
</comment>
<comment type="similarity">
    <text evidence="1">Belongs to the HflD family.</text>
</comment>
<protein>
    <recommendedName>
        <fullName evidence="1">High frequency lysogenization protein HflD homolog</fullName>
    </recommendedName>
</protein>
<evidence type="ECO:0000255" key="1">
    <source>
        <dbReference type="HAMAP-Rule" id="MF_00695"/>
    </source>
</evidence>
<keyword id="KW-0997">Cell inner membrane</keyword>
<keyword id="KW-1003">Cell membrane</keyword>
<keyword id="KW-0963">Cytoplasm</keyword>
<keyword id="KW-0472">Membrane</keyword>
<name>HFLD_ECTM1</name>
<accession>A4XUZ0</accession>
<gene>
    <name evidence="1" type="primary">hflD</name>
    <name type="ordered locus">Pmen_2400</name>
</gene>
<dbReference type="EMBL" id="CP000680">
    <property type="protein sequence ID" value="ABP85156.1"/>
    <property type="molecule type" value="Genomic_DNA"/>
</dbReference>
<dbReference type="SMR" id="A4XUZ0"/>
<dbReference type="STRING" id="399739.Pmen_2400"/>
<dbReference type="KEGG" id="pmy:Pmen_2400"/>
<dbReference type="PATRIC" id="fig|399739.8.peg.2422"/>
<dbReference type="eggNOG" id="COG2915">
    <property type="taxonomic scope" value="Bacteria"/>
</dbReference>
<dbReference type="HOGENOM" id="CLU_098920_0_0_6"/>
<dbReference type="OrthoDB" id="9788031at2"/>
<dbReference type="GO" id="GO:0005737">
    <property type="term" value="C:cytoplasm"/>
    <property type="evidence" value="ECO:0007669"/>
    <property type="project" value="UniProtKB-SubCell"/>
</dbReference>
<dbReference type="GO" id="GO:0005886">
    <property type="term" value="C:plasma membrane"/>
    <property type="evidence" value="ECO:0007669"/>
    <property type="project" value="UniProtKB-SubCell"/>
</dbReference>
<dbReference type="Gene3D" id="1.10.3890.10">
    <property type="entry name" value="HflD-like"/>
    <property type="match status" value="1"/>
</dbReference>
<dbReference type="HAMAP" id="MF_00695">
    <property type="entry name" value="HflD_protein"/>
    <property type="match status" value="1"/>
</dbReference>
<dbReference type="InterPro" id="IPR007451">
    <property type="entry name" value="HflD"/>
</dbReference>
<dbReference type="InterPro" id="IPR035932">
    <property type="entry name" value="HflD-like_sf"/>
</dbReference>
<dbReference type="NCBIfam" id="NF001246">
    <property type="entry name" value="PRK00218.1-2"/>
    <property type="match status" value="1"/>
</dbReference>
<dbReference type="NCBIfam" id="NF001247">
    <property type="entry name" value="PRK00218.1-3"/>
    <property type="match status" value="1"/>
</dbReference>
<dbReference type="PANTHER" id="PTHR38100">
    <property type="entry name" value="HIGH FREQUENCY LYSOGENIZATION PROTEIN HFLD"/>
    <property type="match status" value="1"/>
</dbReference>
<dbReference type="PANTHER" id="PTHR38100:SF1">
    <property type="entry name" value="HIGH FREQUENCY LYSOGENIZATION PROTEIN HFLD"/>
    <property type="match status" value="1"/>
</dbReference>
<dbReference type="Pfam" id="PF04356">
    <property type="entry name" value="DUF489"/>
    <property type="match status" value="1"/>
</dbReference>
<dbReference type="SUPFAM" id="SSF101322">
    <property type="entry name" value="YcfC-like"/>
    <property type="match status" value="1"/>
</dbReference>
<sequence>MTPMQEQLVALGAVFEAAVLADKIARTGQVSEASMSCMLGSLLVRDPQTTLDVYGGDDLNLRDGYRALISSLERNPSALQREPLRYSLAMIGLERQLDKRSDMLQVMGSRLDQIQQQVEHFGLVHDNVIAACGGLYQDTISTFRQRIQVHGDMRFLQQPNNAAKIRALLLAGIRSARLWRQLGGHRWQLVFSRGKLLKALYDMTRN</sequence>
<organism>
    <name type="scientific">Ectopseudomonas mendocina (strain ymp)</name>
    <name type="common">Pseudomonas mendocina</name>
    <dbReference type="NCBI Taxonomy" id="399739"/>
    <lineage>
        <taxon>Bacteria</taxon>
        <taxon>Pseudomonadati</taxon>
        <taxon>Pseudomonadota</taxon>
        <taxon>Gammaproteobacteria</taxon>
        <taxon>Pseudomonadales</taxon>
        <taxon>Pseudomonadaceae</taxon>
        <taxon>Ectopseudomonas</taxon>
    </lineage>
</organism>